<accession>P48893</accession>
<gene>
    <name type="primary">ATP6</name>
</gene>
<sequence>MMVDLFSSLDGMTSLWSWLTPMFLSVFMIWNKTWSMDQNNIIKYLAASNWNNSTYNLTKSLLTIMMVLIIFNNLLGMAPFTYGITTSLWVNMTLALLLWGLILLSGYIKSPKKSLAHLAPSGAPLLLLPFLILIESISIMIRPLTLTVRLVANMSAGHIILALMASVLSSNLSNTSLSLSYLIMVGYYLFEFFVCFIQAYIFTLLLSLYMNEHP</sequence>
<geneLocation type="mitochondrion"/>
<proteinExistence type="inferred from homology"/>
<dbReference type="EMBL" id="X83390">
    <property type="protein sequence ID" value="CAA58302.1"/>
    <property type="molecule type" value="Genomic_DNA"/>
</dbReference>
<dbReference type="PIR" id="S59149">
    <property type="entry name" value="S59149"/>
</dbReference>
<dbReference type="RefSeq" id="NP_007335.1">
    <property type="nucleotide sequence ID" value="NC_001761.1"/>
</dbReference>
<dbReference type="SMR" id="P48893"/>
<dbReference type="GeneID" id="808006"/>
<dbReference type="CTD" id="4508"/>
<dbReference type="GO" id="GO:0005743">
    <property type="term" value="C:mitochondrial inner membrane"/>
    <property type="evidence" value="ECO:0007669"/>
    <property type="project" value="UniProtKB-SubCell"/>
</dbReference>
<dbReference type="GO" id="GO:0045259">
    <property type="term" value="C:proton-transporting ATP synthase complex"/>
    <property type="evidence" value="ECO:0007669"/>
    <property type="project" value="UniProtKB-KW"/>
</dbReference>
<dbReference type="GO" id="GO:0046933">
    <property type="term" value="F:proton-transporting ATP synthase activity, rotational mechanism"/>
    <property type="evidence" value="ECO:0007669"/>
    <property type="project" value="TreeGrafter"/>
</dbReference>
<dbReference type="CDD" id="cd00310">
    <property type="entry name" value="ATP-synt_Fo_a_6"/>
    <property type="match status" value="1"/>
</dbReference>
<dbReference type="Gene3D" id="1.20.120.220">
    <property type="entry name" value="ATP synthase, F0 complex, subunit A"/>
    <property type="match status" value="1"/>
</dbReference>
<dbReference type="InterPro" id="IPR000568">
    <property type="entry name" value="ATP_synth_F0_asu"/>
</dbReference>
<dbReference type="InterPro" id="IPR023011">
    <property type="entry name" value="ATP_synth_F0_asu_AS"/>
</dbReference>
<dbReference type="InterPro" id="IPR045083">
    <property type="entry name" value="ATP_synth_F0_asu_bact/mt"/>
</dbReference>
<dbReference type="InterPro" id="IPR035908">
    <property type="entry name" value="F0_ATP_A_sf"/>
</dbReference>
<dbReference type="NCBIfam" id="TIGR01131">
    <property type="entry name" value="ATP_synt_6_or_A"/>
    <property type="match status" value="1"/>
</dbReference>
<dbReference type="PANTHER" id="PTHR11410">
    <property type="entry name" value="ATP SYNTHASE SUBUNIT A"/>
    <property type="match status" value="1"/>
</dbReference>
<dbReference type="PANTHER" id="PTHR11410:SF0">
    <property type="entry name" value="ATP SYNTHASE SUBUNIT A"/>
    <property type="match status" value="1"/>
</dbReference>
<dbReference type="Pfam" id="PF00119">
    <property type="entry name" value="ATP-synt_A"/>
    <property type="match status" value="1"/>
</dbReference>
<dbReference type="PRINTS" id="PR00123">
    <property type="entry name" value="ATPASEA"/>
</dbReference>
<dbReference type="SUPFAM" id="SSF81336">
    <property type="entry name" value="F1F0 ATP synthase subunit A"/>
    <property type="match status" value="1"/>
</dbReference>
<dbReference type="PROSITE" id="PS00449">
    <property type="entry name" value="ATPASE_A"/>
    <property type="match status" value="1"/>
</dbReference>
<keyword id="KW-0066">ATP synthesis</keyword>
<keyword id="KW-0138">CF(0)</keyword>
<keyword id="KW-0375">Hydrogen ion transport</keyword>
<keyword id="KW-0406">Ion transport</keyword>
<keyword id="KW-0472">Membrane</keyword>
<keyword id="KW-0496">Mitochondrion</keyword>
<keyword id="KW-0999">Mitochondrion inner membrane</keyword>
<keyword id="KW-0812">Transmembrane</keyword>
<keyword id="KW-1133">Transmembrane helix</keyword>
<keyword id="KW-0813">Transport</keyword>
<comment type="function">
    <text>Mitochondrial membrane ATP synthase (F(1)F(0) ATP synthase or Complex V) produces ATP from ADP in the presence of a proton gradient across the membrane which is generated by electron transport complexes of the respiratory chain. F-type ATPases consist of two structural domains, F(1) - containing the extramembraneous catalytic core and F(0) - containing the membrane proton channel, linked together by a central stalk and a peripheral stalk. During catalysis, ATP synthesis in the catalytic domain of F(1) is coupled via a rotary mechanism of the central stalk subunits to proton translocation. Key component of the proton channel; it may play a direct role in the translocation of protons across the membrane.</text>
</comment>
<comment type="subunit">
    <text>F-type ATPases have 2 components, CF(1) - the catalytic core - and CF(0) - the membrane proton channel. CF(1) has five subunits: alpha(3), beta(3), gamma(1), delta(1), epsilon(1). CF(0) has three main subunits: a, b and c.</text>
</comment>
<comment type="subcellular location">
    <subcellularLocation>
        <location>Mitochondrion inner membrane</location>
        <topology>Multi-pass membrane protein</topology>
    </subcellularLocation>
</comment>
<comment type="similarity">
    <text evidence="2">Belongs to the ATPase A chain family.</text>
</comment>
<feature type="chain" id="PRO_0000082080" description="ATP synthase subunit a">
    <location>
        <begin position="1"/>
        <end position="214"/>
    </location>
</feature>
<feature type="transmembrane region" description="Helical" evidence="1">
    <location>
        <begin position="9"/>
        <end position="29"/>
    </location>
</feature>
<feature type="transmembrane region" description="Helical" evidence="1">
    <location>
        <begin position="64"/>
        <end position="84"/>
    </location>
</feature>
<feature type="transmembrane region" description="Helical" evidence="1">
    <location>
        <begin position="88"/>
        <end position="108"/>
    </location>
</feature>
<feature type="transmembrane region" description="Helical" evidence="1">
    <location>
        <begin position="121"/>
        <end position="141"/>
    </location>
</feature>
<feature type="transmembrane region" description="Helical" evidence="1">
    <location>
        <begin position="150"/>
        <end position="170"/>
    </location>
</feature>
<feature type="transmembrane region" description="Helical" evidence="1">
    <location>
        <begin position="182"/>
        <end position="202"/>
    </location>
</feature>
<name>ATP6_ALBCA</name>
<organism>
    <name type="scientific">Albinaria caerulea</name>
    <name type="common">Land snail</name>
    <dbReference type="NCBI Taxonomy" id="42349"/>
    <lineage>
        <taxon>Eukaryota</taxon>
        <taxon>Metazoa</taxon>
        <taxon>Spiralia</taxon>
        <taxon>Lophotrochozoa</taxon>
        <taxon>Mollusca</taxon>
        <taxon>Gastropoda</taxon>
        <taxon>Heterobranchia</taxon>
        <taxon>Euthyneura</taxon>
        <taxon>Panpulmonata</taxon>
        <taxon>Eupulmonata</taxon>
        <taxon>Stylommatophora</taxon>
        <taxon>Helicina</taxon>
        <taxon>Clausilioidea</taxon>
        <taxon>Clausiliidae</taxon>
        <taxon>Alopiinae</taxon>
        <taxon>Albinaria</taxon>
    </lineage>
</organism>
<reference key="1">
    <citation type="journal article" date="1995" name="Genetics">
        <title>Complete sequence and gene organization of the mitochondrial genome of the land snail Albinaria coerulea.</title>
        <authorList>
            <person name="Hatzoglou E."/>
            <person name="Rodakis G.C."/>
            <person name="Lecanidou R."/>
        </authorList>
    </citation>
    <scope>NUCLEOTIDE SEQUENCE [GENOMIC DNA]</scope>
</reference>
<evidence type="ECO:0000255" key="1"/>
<evidence type="ECO:0000305" key="2"/>
<protein>
    <recommendedName>
        <fullName>ATP synthase subunit a</fullName>
    </recommendedName>
    <alternativeName>
        <fullName>F-ATPase protein 6</fullName>
    </alternativeName>
</protein>